<organism>
    <name type="scientific">Maricaulis maris (strain MCS10)</name>
    <name type="common">Caulobacter maris</name>
    <dbReference type="NCBI Taxonomy" id="394221"/>
    <lineage>
        <taxon>Bacteria</taxon>
        <taxon>Pseudomonadati</taxon>
        <taxon>Pseudomonadota</taxon>
        <taxon>Alphaproteobacteria</taxon>
        <taxon>Maricaulales</taxon>
        <taxon>Maricaulaceae</taxon>
        <taxon>Maricaulis</taxon>
    </lineage>
</organism>
<comment type="function">
    <text evidence="1">May play a role in DNA repair. It seems to be involved in an RecBC-independent recombinational process of DNA repair. It may act with RecF and RecO.</text>
</comment>
<comment type="similarity">
    <text evidence="1">Belongs to the RecR family.</text>
</comment>
<accession>Q0ASK7</accession>
<feature type="chain" id="PRO_0000322907" description="Recombination protein RecR">
    <location>
        <begin position="1"/>
        <end position="201"/>
    </location>
</feature>
<feature type="domain" description="Toprim" evidence="1">
    <location>
        <begin position="83"/>
        <end position="178"/>
    </location>
</feature>
<feature type="zinc finger region" description="C4-type" evidence="1">
    <location>
        <begin position="60"/>
        <end position="75"/>
    </location>
</feature>
<dbReference type="EMBL" id="CP000449">
    <property type="protein sequence ID" value="ABI64730.1"/>
    <property type="molecule type" value="Genomic_DNA"/>
</dbReference>
<dbReference type="RefSeq" id="WP_011642377.1">
    <property type="nucleotide sequence ID" value="NC_008347.1"/>
</dbReference>
<dbReference type="SMR" id="Q0ASK7"/>
<dbReference type="STRING" id="394221.Mmar10_0437"/>
<dbReference type="KEGG" id="mmr:Mmar10_0437"/>
<dbReference type="eggNOG" id="COG0353">
    <property type="taxonomic scope" value="Bacteria"/>
</dbReference>
<dbReference type="HOGENOM" id="CLU_060739_1_1_5"/>
<dbReference type="OrthoDB" id="9802672at2"/>
<dbReference type="Proteomes" id="UP000001964">
    <property type="component" value="Chromosome"/>
</dbReference>
<dbReference type="GO" id="GO:0003677">
    <property type="term" value="F:DNA binding"/>
    <property type="evidence" value="ECO:0007669"/>
    <property type="project" value="UniProtKB-UniRule"/>
</dbReference>
<dbReference type="GO" id="GO:0008270">
    <property type="term" value="F:zinc ion binding"/>
    <property type="evidence" value="ECO:0007669"/>
    <property type="project" value="UniProtKB-KW"/>
</dbReference>
<dbReference type="GO" id="GO:0006310">
    <property type="term" value="P:DNA recombination"/>
    <property type="evidence" value="ECO:0007669"/>
    <property type="project" value="UniProtKB-UniRule"/>
</dbReference>
<dbReference type="GO" id="GO:0006281">
    <property type="term" value="P:DNA repair"/>
    <property type="evidence" value="ECO:0007669"/>
    <property type="project" value="UniProtKB-UniRule"/>
</dbReference>
<dbReference type="CDD" id="cd01025">
    <property type="entry name" value="TOPRIM_recR"/>
    <property type="match status" value="1"/>
</dbReference>
<dbReference type="Gene3D" id="3.40.1360.10">
    <property type="match status" value="1"/>
</dbReference>
<dbReference type="Gene3D" id="1.10.8.420">
    <property type="entry name" value="RecR Domain 1"/>
    <property type="match status" value="1"/>
</dbReference>
<dbReference type="HAMAP" id="MF_00017">
    <property type="entry name" value="RecR"/>
    <property type="match status" value="1"/>
</dbReference>
<dbReference type="InterPro" id="IPR000093">
    <property type="entry name" value="DNA_Rcmb_RecR"/>
</dbReference>
<dbReference type="InterPro" id="IPR023627">
    <property type="entry name" value="Rcmb_RecR"/>
</dbReference>
<dbReference type="InterPro" id="IPR015967">
    <property type="entry name" value="Rcmb_RecR_Znf"/>
</dbReference>
<dbReference type="InterPro" id="IPR006171">
    <property type="entry name" value="TOPRIM_dom"/>
</dbReference>
<dbReference type="InterPro" id="IPR034137">
    <property type="entry name" value="TOPRIM_RecR"/>
</dbReference>
<dbReference type="NCBIfam" id="TIGR00615">
    <property type="entry name" value="recR"/>
    <property type="match status" value="1"/>
</dbReference>
<dbReference type="PANTHER" id="PTHR30446">
    <property type="entry name" value="RECOMBINATION PROTEIN RECR"/>
    <property type="match status" value="1"/>
</dbReference>
<dbReference type="PANTHER" id="PTHR30446:SF0">
    <property type="entry name" value="RECOMBINATION PROTEIN RECR"/>
    <property type="match status" value="1"/>
</dbReference>
<dbReference type="Pfam" id="PF21175">
    <property type="entry name" value="RecR_C"/>
    <property type="match status" value="1"/>
</dbReference>
<dbReference type="Pfam" id="PF21176">
    <property type="entry name" value="RecR_HhH"/>
    <property type="match status" value="1"/>
</dbReference>
<dbReference type="Pfam" id="PF02132">
    <property type="entry name" value="RecR_ZnF"/>
    <property type="match status" value="1"/>
</dbReference>
<dbReference type="Pfam" id="PF13662">
    <property type="entry name" value="Toprim_4"/>
    <property type="match status" value="1"/>
</dbReference>
<dbReference type="SMART" id="SM00493">
    <property type="entry name" value="TOPRIM"/>
    <property type="match status" value="1"/>
</dbReference>
<dbReference type="SUPFAM" id="SSF111304">
    <property type="entry name" value="Recombination protein RecR"/>
    <property type="match status" value="1"/>
</dbReference>
<dbReference type="PROSITE" id="PS50880">
    <property type="entry name" value="TOPRIM"/>
    <property type="match status" value="1"/>
</dbReference>
<proteinExistence type="inferred from homology"/>
<gene>
    <name evidence="1" type="primary">recR</name>
    <name type="ordered locus">Mmar10_0437</name>
</gene>
<protein>
    <recommendedName>
        <fullName evidence="1">Recombination protein RecR</fullName>
    </recommendedName>
</protein>
<sequence length="201" mass="21102">MKTASAGPEIERLISLLAKLPGLGPRSARRAALNLLGKKDALMRPLAEALADAADKIRACSECGNMDVSDPCTVCAAPNRLDAAICVVETVGDLWALERAGAFKGRYHVLGGVLSALDGVRPEDLNITKLVERSAREEVSEIVLALNATVDGQTTAHYLADRMAGCNVSITSLARGVPVGGELDYLDDGTLAAAFRSRSTV</sequence>
<name>RECR_MARMM</name>
<reference key="1">
    <citation type="submission" date="2006-08" db="EMBL/GenBank/DDBJ databases">
        <title>Complete sequence of Maricaulis maris MCS10.</title>
        <authorList>
            <consortium name="US DOE Joint Genome Institute"/>
            <person name="Copeland A."/>
            <person name="Lucas S."/>
            <person name="Lapidus A."/>
            <person name="Barry K."/>
            <person name="Detter J.C."/>
            <person name="Glavina del Rio T."/>
            <person name="Hammon N."/>
            <person name="Israni S."/>
            <person name="Dalin E."/>
            <person name="Tice H."/>
            <person name="Pitluck S."/>
            <person name="Saunders E."/>
            <person name="Brettin T."/>
            <person name="Bruce D."/>
            <person name="Han C."/>
            <person name="Tapia R."/>
            <person name="Gilna P."/>
            <person name="Schmutz J."/>
            <person name="Larimer F."/>
            <person name="Land M."/>
            <person name="Hauser L."/>
            <person name="Kyrpides N."/>
            <person name="Mikhailova N."/>
            <person name="Viollier P."/>
            <person name="Stephens C."/>
            <person name="Richardson P."/>
        </authorList>
    </citation>
    <scope>NUCLEOTIDE SEQUENCE [LARGE SCALE GENOMIC DNA]</scope>
    <source>
        <strain>MCS10</strain>
    </source>
</reference>
<evidence type="ECO:0000255" key="1">
    <source>
        <dbReference type="HAMAP-Rule" id="MF_00017"/>
    </source>
</evidence>
<keyword id="KW-0227">DNA damage</keyword>
<keyword id="KW-0233">DNA recombination</keyword>
<keyword id="KW-0234">DNA repair</keyword>
<keyword id="KW-0479">Metal-binding</keyword>
<keyword id="KW-1185">Reference proteome</keyword>
<keyword id="KW-0862">Zinc</keyword>
<keyword id="KW-0863">Zinc-finger</keyword>